<protein>
    <recommendedName>
        <fullName evidence="1">Enoyl-[acyl-carrier-protein] reductase [NADH]</fullName>
        <shortName evidence="1">ENR</shortName>
        <ecNumber evidence="1">1.3.1.9</ecNumber>
    </recommendedName>
</protein>
<gene>
    <name evidence="1" type="primary">fabV</name>
    <name type="ordered locus">Bmul_3324</name>
    <name type="ordered locus">BMULJ_05202</name>
</gene>
<name>FABV_BURM1</name>
<feature type="chain" id="PRO_1000188359" description="Enoyl-[acyl-carrier-protein] reductase [NADH]">
    <location>
        <begin position="1"/>
        <end position="400"/>
    </location>
</feature>
<feature type="active site" description="Proton donor" evidence="1">
    <location>
        <position position="235"/>
    </location>
</feature>
<feature type="binding site" evidence="1">
    <location>
        <begin position="48"/>
        <end position="53"/>
    </location>
    <ligand>
        <name>NAD(+)</name>
        <dbReference type="ChEBI" id="CHEBI:57540"/>
    </ligand>
</feature>
<feature type="binding site" evidence="1">
    <location>
        <begin position="74"/>
        <end position="75"/>
    </location>
    <ligand>
        <name>NAD(+)</name>
        <dbReference type="ChEBI" id="CHEBI:57540"/>
    </ligand>
</feature>
<feature type="binding site" evidence="1">
    <location>
        <begin position="111"/>
        <end position="112"/>
    </location>
    <ligand>
        <name>NAD(+)</name>
        <dbReference type="ChEBI" id="CHEBI:57540"/>
    </ligand>
</feature>
<feature type="binding site" evidence="1">
    <location>
        <begin position="139"/>
        <end position="140"/>
    </location>
    <ligand>
        <name>NAD(+)</name>
        <dbReference type="ChEBI" id="CHEBI:57540"/>
    </ligand>
</feature>
<feature type="binding site" evidence="1">
    <location>
        <position position="225"/>
    </location>
    <ligand>
        <name>substrate</name>
    </ligand>
</feature>
<feature type="binding site" evidence="1">
    <location>
        <position position="244"/>
    </location>
    <ligand>
        <name>NAD(+)</name>
        <dbReference type="ChEBI" id="CHEBI:57540"/>
    </ligand>
</feature>
<feature type="binding site" evidence="1">
    <location>
        <begin position="273"/>
        <end position="275"/>
    </location>
    <ligand>
        <name>NAD(+)</name>
        <dbReference type="ChEBI" id="CHEBI:57540"/>
    </ligand>
</feature>
<feature type="site" description="Plays an important role in discriminating NADH against NADPH" evidence="1">
    <location>
        <position position="75"/>
    </location>
</feature>
<sequence>MIIKPRVRGFICVTTHPVGCEANVKEQIDYVTSHGPIANGPKKVLVIGASTGYGLAARISAAFGAGADTLGVFFERPGSETKPGTAGWYNSAAFERFATEKGLYARSINGDAFSDQVKQVTIDTIKQDLGKVDLVVYSLAAPRRTHPKTGETISSTLKPIGKTVTFRGIDTDKEVIRETVLEPATQEEIDGTVAVMGGEDWQMWIDALDEAGVLADGAKTTAFTYLGEQITHDIYWNGSIGEAKKDLDKKVLSIRDKLAAHGGDARVSVLKAVVTQASSAIPMMPLYLSLLFKVMKEAGTHEGCIEQVYGLFKDSLYGATPHLDDEGRLRADYKELDPQIQKKVVELWDQVTNENLYELTDFAGYKTDFLRLFGFEIAGVDYDADVNPDVKIPRIIDTTV</sequence>
<keyword id="KW-0275">Fatty acid biosynthesis</keyword>
<keyword id="KW-0276">Fatty acid metabolism</keyword>
<keyword id="KW-0444">Lipid biosynthesis</keyword>
<keyword id="KW-0443">Lipid metabolism</keyword>
<keyword id="KW-0520">NAD</keyword>
<keyword id="KW-0560">Oxidoreductase</keyword>
<keyword id="KW-1185">Reference proteome</keyword>
<proteinExistence type="inferred from homology"/>
<accession>A9ALQ1</accession>
<dbReference type="EC" id="1.3.1.9" evidence="1"/>
<dbReference type="EMBL" id="CP000869">
    <property type="protein sequence ID" value="ABX17008.1"/>
    <property type="molecule type" value="Genomic_DNA"/>
</dbReference>
<dbReference type="EMBL" id="AP009386">
    <property type="protein sequence ID" value="BAG47040.1"/>
    <property type="molecule type" value="Genomic_DNA"/>
</dbReference>
<dbReference type="RefSeq" id="WP_012216303.1">
    <property type="nucleotide sequence ID" value="NC_010086.1"/>
</dbReference>
<dbReference type="SMR" id="A9ALQ1"/>
<dbReference type="STRING" id="395019.BMULJ_05202"/>
<dbReference type="KEGG" id="bmj:BMULJ_05202"/>
<dbReference type="KEGG" id="bmu:Bmul_3324"/>
<dbReference type="eggNOG" id="COG3007">
    <property type="taxonomic scope" value="Bacteria"/>
</dbReference>
<dbReference type="HOGENOM" id="CLU_057698_1_0_4"/>
<dbReference type="UniPathway" id="UPA00094"/>
<dbReference type="Proteomes" id="UP000008815">
    <property type="component" value="Chromosome 2"/>
</dbReference>
<dbReference type="GO" id="GO:0004318">
    <property type="term" value="F:enoyl-[acyl-carrier-protein] reductase (NADH) activity"/>
    <property type="evidence" value="ECO:0007669"/>
    <property type="project" value="UniProtKB-UniRule"/>
</dbReference>
<dbReference type="GO" id="GO:0051287">
    <property type="term" value="F:NAD binding"/>
    <property type="evidence" value="ECO:0007669"/>
    <property type="project" value="UniProtKB-UniRule"/>
</dbReference>
<dbReference type="GO" id="GO:0050343">
    <property type="term" value="F:trans-2-enoyl-CoA reductase (NADH) activity"/>
    <property type="evidence" value="ECO:0007669"/>
    <property type="project" value="TreeGrafter"/>
</dbReference>
<dbReference type="GO" id="GO:0006633">
    <property type="term" value="P:fatty acid biosynthetic process"/>
    <property type="evidence" value="ECO:0007669"/>
    <property type="project" value="UniProtKB-UniRule"/>
</dbReference>
<dbReference type="FunFam" id="3.40.50.720:FF:000221">
    <property type="entry name" value="Enoyl-[acyl-carrier-protein] reductase [NADH]"/>
    <property type="match status" value="1"/>
</dbReference>
<dbReference type="Gene3D" id="3.40.50.720">
    <property type="entry name" value="NAD(P)-binding Rossmann-like Domain"/>
    <property type="match status" value="1"/>
</dbReference>
<dbReference type="HAMAP" id="MF_01838">
    <property type="entry name" value="FabV_reductase"/>
    <property type="match status" value="1"/>
</dbReference>
<dbReference type="InterPro" id="IPR024906">
    <property type="entry name" value="Eno_Rdtase_FAD-bd_dom"/>
</dbReference>
<dbReference type="InterPro" id="IPR024910">
    <property type="entry name" value="Enoyl-CoA_Rdtase_cat_dom"/>
</dbReference>
<dbReference type="InterPro" id="IPR050048">
    <property type="entry name" value="FabV-like_NADH_b"/>
</dbReference>
<dbReference type="InterPro" id="IPR010758">
    <property type="entry name" value="Trans-2-enoyl-CoA_reductase"/>
</dbReference>
<dbReference type="NCBIfam" id="NF043048">
    <property type="entry name" value="EnoyACPredFabV"/>
    <property type="match status" value="1"/>
</dbReference>
<dbReference type="NCBIfam" id="NF010177">
    <property type="entry name" value="PRK13656.1"/>
    <property type="match status" value="1"/>
</dbReference>
<dbReference type="PANTHER" id="PTHR37480">
    <property type="entry name" value="ENOYL-[ACYL-CARRIER-PROTEIN] REDUCTASE [NADH]"/>
    <property type="match status" value="1"/>
</dbReference>
<dbReference type="PANTHER" id="PTHR37480:SF1">
    <property type="entry name" value="ENOYL-[ACYL-CARRIER-PROTEIN] REDUCTASE [NADH]"/>
    <property type="match status" value="1"/>
</dbReference>
<dbReference type="Pfam" id="PF07055">
    <property type="entry name" value="Eno-Rase_FAD_bd"/>
    <property type="match status" value="1"/>
</dbReference>
<dbReference type="Pfam" id="PF12242">
    <property type="entry name" value="Eno-Rase_NADH_b"/>
    <property type="match status" value="1"/>
</dbReference>
<dbReference type="Pfam" id="PF12241">
    <property type="entry name" value="Enoyl_reductase"/>
    <property type="match status" value="1"/>
</dbReference>
<reference key="1">
    <citation type="submission" date="2007-10" db="EMBL/GenBank/DDBJ databases">
        <title>Complete sequence of chromosome 2 of Burkholderia multivorans ATCC 17616.</title>
        <authorList>
            <person name="Copeland A."/>
            <person name="Lucas S."/>
            <person name="Lapidus A."/>
            <person name="Barry K."/>
            <person name="Glavina del Rio T."/>
            <person name="Dalin E."/>
            <person name="Tice H."/>
            <person name="Pitluck S."/>
            <person name="Chain P."/>
            <person name="Malfatti S."/>
            <person name="Shin M."/>
            <person name="Vergez L."/>
            <person name="Schmutz J."/>
            <person name="Larimer F."/>
            <person name="Land M."/>
            <person name="Hauser L."/>
            <person name="Kyrpides N."/>
            <person name="Kim E."/>
            <person name="Tiedje J."/>
            <person name="Richardson P."/>
        </authorList>
    </citation>
    <scope>NUCLEOTIDE SEQUENCE [LARGE SCALE GENOMIC DNA]</scope>
    <source>
        <strain>ATCC 17616 / 249</strain>
    </source>
</reference>
<reference key="2">
    <citation type="submission" date="2007-04" db="EMBL/GenBank/DDBJ databases">
        <title>Complete genome sequence of Burkholderia multivorans ATCC 17616.</title>
        <authorList>
            <person name="Ohtsubo Y."/>
            <person name="Yamashita A."/>
            <person name="Kurokawa K."/>
            <person name="Takami H."/>
            <person name="Yuhara S."/>
            <person name="Nishiyama E."/>
            <person name="Endo R."/>
            <person name="Miyazaki R."/>
            <person name="Ono A."/>
            <person name="Yano K."/>
            <person name="Ito M."/>
            <person name="Sota M."/>
            <person name="Yuji N."/>
            <person name="Hattori M."/>
            <person name="Tsuda M."/>
        </authorList>
    </citation>
    <scope>NUCLEOTIDE SEQUENCE [LARGE SCALE GENOMIC DNA]</scope>
    <source>
        <strain>ATCC 17616 / 249</strain>
    </source>
</reference>
<organism>
    <name type="scientific">Burkholderia multivorans (strain ATCC 17616 / 249)</name>
    <dbReference type="NCBI Taxonomy" id="395019"/>
    <lineage>
        <taxon>Bacteria</taxon>
        <taxon>Pseudomonadati</taxon>
        <taxon>Pseudomonadota</taxon>
        <taxon>Betaproteobacteria</taxon>
        <taxon>Burkholderiales</taxon>
        <taxon>Burkholderiaceae</taxon>
        <taxon>Burkholderia</taxon>
        <taxon>Burkholderia cepacia complex</taxon>
    </lineage>
</organism>
<evidence type="ECO:0000255" key="1">
    <source>
        <dbReference type="HAMAP-Rule" id="MF_01838"/>
    </source>
</evidence>
<comment type="function">
    <text evidence="1">Involved in the final reduction of the elongation cycle of fatty acid synthesis (FAS II). Catalyzes the reduction of a carbon-carbon double bond in an enoyl moiety that is covalently linked to an acyl carrier protein (ACP).</text>
</comment>
<comment type="catalytic activity">
    <reaction evidence="1">
        <text>a 2,3-saturated acyl-[ACP] + NAD(+) = a (2E)-enoyl-[ACP] + NADH + H(+)</text>
        <dbReference type="Rhea" id="RHEA:10240"/>
        <dbReference type="Rhea" id="RHEA-COMP:9925"/>
        <dbReference type="Rhea" id="RHEA-COMP:9926"/>
        <dbReference type="ChEBI" id="CHEBI:15378"/>
        <dbReference type="ChEBI" id="CHEBI:57540"/>
        <dbReference type="ChEBI" id="CHEBI:57945"/>
        <dbReference type="ChEBI" id="CHEBI:78784"/>
        <dbReference type="ChEBI" id="CHEBI:78785"/>
        <dbReference type="EC" id="1.3.1.9"/>
    </reaction>
</comment>
<comment type="pathway">
    <text evidence="1">Lipid metabolism; fatty acid biosynthesis.</text>
</comment>
<comment type="subunit">
    <text evidence="1">Monomer.</text>
</comment>
<comment type="similarity">
    <text evidence="1">Belongs to the TER reductase family.</text>
</comment>